<organism>
    <name type="scientific">Streptomyces coelicolor (strain ATCC BAA-471 / A3(2) / M145)</name>
    <dbReference type="NCBI Taxonomy" id="100226"/>
    <lineage>
        <taxon>Bacteria</taxon>
        <taxon>Bacillati</taxon>
        <taxon>Actinomycetota</taxon>
        <taxon>Actinomycetes</taxon>
        <taxon>Kitasatosporales</taxon>
        <taxon>Streptomycetaceae</taxon>
        <taxon>Streptomyces</taxon>
        <taxon>Streptomyces albidoflavus group</taxon>
    </lineage>
</organism>
<accession>Q9FBV0</accession>
<sequence length="202" mass="21961">MSVSGPLPRIPAEAGAALFTDARTAYSFADTPVDDATLTGIWELARWAPTAANTQPMRVLYVRTAEGKERLLPHLDEGNRPKSASAPVVAVLAVDHRFHEHLPHVLPVRPEMKEYFEGEPAQREAITSFNGPLQAGYFILAVRALGLAAGPMAGFDPAGIDKEFFADSDWHSILVVNIGHPAGPPAFDRMPRLAHEHALDWA</sequence>
<protein>
    <recommendedName>
        <fullName evidence="1">Putative NADH dehydrogenase/NAD(P)H nitroreductase SCO7141</fullName>
        <ecNumber evidence="1">1.-.-.-</ecNumber>
    </recommendedName>
</protein>
<proteinExistence type="inferred from homology"/>
<evidence type="ECO:0000255" key="1">
    <source>
        <dbReference type="HAMAP-Rule" id="MF_01204"/>
    </source>
</evidence>
<keyword id="KW-0285">Flavoprotein</keyword>
<keyword id="KW-0288">FMN</keyword>
<keyword id="KW-0520">NAD</keyword>
<keyword id="KW-0521">NADP</keyword>
<keyword id="KW-0560">Oxidoreductase</keyword>
<keyword id="KW-1185">Reference proteome</keyword>
<feature type="chain" id="PRO_0000072733" description="Putative NADH dehydrogenase/NAD(P)H nitroreductase SCO7141">
    <location>
        <begin position="1"/>
        <end position="202"/>
    </location>
</feature>
<name>Y7141_STRCO</name>
<comment type="cofactor">
    <cofactor evidence="1">
        <name>FMN</name>
        <dbReference type="ChEBI" id="CHEBI:58210"/>
    </cofactor>
</comment>
<comment type="similarity">
    <text evidence="1">Belongs to the nitroreductase family. HadB/RutE subfamily.</text>
</comment>
<gene>
    <name type="ordered locus">SCO7141</name>
    <name type="ORF">SC9A4.03c</name>
</gene>
<reference key="1">
    <citation type="journal article" date="2002" name="Nature">
        <title>Complete genome sequence of the model actinomycete Streptomyces coelicolor A3(2).</title>
        <authorList>
            <person name="Bentley S.D."/>
            <person name="Chater K.F."/>
            <person name="Cerdeno-Tarraga A.-M."/>
            <person name="Challis G.L."/>
            <person name="Thomson N.R."/>
            <person name="James K.D."/>
            <person name="Harris D.E."/>
            <person name="Quail M.A."/>
            <person name="Kieser H."/>
            <person name="Harper D."/>
            <person name="Bateman A."/>
            <person name="Brown S."/>
            <person name="Chandra G."/>
            <person name="Chen C.W."/>
            <person name="Collins M."/>
            <person name="Cronin A."/>
            <person name="Fraser A."/>
            <person name="Goble A."/>
            <person name="Hidalgo J."/>
            <person name="Hornsby T."/>
            <person name="Howarth S."/>
            <person name="Huang C.-H."/>
            <person name="Kieser T."/>
            <person name="Larke L."/>
            <person name="Murphy L.D."/>
            <person name="Oliver K."/>
            <person name="O'Neil S."/>
            <person name="Rabbinowitsch E."/>
            <person name="Rajandream M.A."/>
            <person name="Rutherford K.M."/>
            <person name="Rutter S."/>
            <person name="Seeger K."/>
            <person name="Saunders D."/>
            <person name="Sharp S."/>
            <person name="Squares R."/>
            <person name="Squares S."/>
            <person name="Taylor K."/>
            <person name="Warren T."/>
            <person name="Wietzorrek A."/>
            <person name="Woodward J.R."/>
            <person name="Barrell B.G."/>
            <person name="Parkhill J."/>
            <person name="Hopwood D.A."/>
        </authorList>
    </citation>
    <scope>NUCLEOTIDE SEQUENCE [LARGE SCALE GENOMIC DNA]</scope>
    <source>
        <strain>ATCC BAA-471 / A3(2) / M145</strain>
    </source>
</reference>
<dbReference type="EC" id="1.-.-.-" evidence="1"/>
<dbReference type="EMBL" id="AL939130">
    <property type="protein sequence ID" value="CAC01630.1"/>
    <property type="molecule type" value="Genomic_DNA"/>
</dbReference>
<dbReference type="RefSeq" id="NP_631200.1">
    <property type="nucleotide sequence ID" value="NC_003888.3"/>
</dbReference>
<dbReference type="RefSeq" id="WP_003972002.1">
    <property type="nucleotide sequence ID" value="NZ_VNID01000012.1"/>
</dbReference>
<dbReference type="SMR" id="Q9FBV0"/>
<dbReference type="STRING" id="100226.gene:17764801"/>
<dbReference type="PaxDb" id="100226-SCO7141"/>
<dbReference type="KEGG" id="sco:SCO7141"/>
<dbReference type="PATRIC" id="fig|100226.15.peg.7243"/>
<dbReference type="eggNOG" id="COG0778">
    <property type="taxonomic scope" value="Bacteria"/>
</dbReference>
<dbReference type="HOGENOM" id="CLU_084441_0_0_11"/>
<dbReference type="InParanoid" id="Q9FBV0"/>
<dbReference type="OrthoDB" id="9784375at2"/>
<dbReference type="PhylomeDB" id="Q9FBV0"/>
<dbReference type="Proteomes" id="UP000001973">
    <property type="component" value="Chromosome"/>
</dbReference>
<dbReference type="GO" id="GO:0016491">
    <property type="term" value="F:oxidoreductase activity"/>
    <property type="evidence" value="ECO:0007669"/>
    <property type="project" value="UniProtKB-UniRule"/>
</dbReference>
<dbReference type="CDD" id="cd02148">
    <property type="entry name" value="RutE-like"/>
    <property type="match status" value="1"/>
</dbReference>
<dbReference type="Gene3D" id="3.40.109.10">
    <property type="entry name" value="NADH Oxidase"/>
    <property type="match status" value="1"/>
</dbReference>
<dbReference type="HAMAP" id="MF_01204">
    <property type="entry name" value="Oxidoreductase_RutE_HadB"/>
    <property type="match status" value="1"/>
</dbReference>
<dbReference type="InterPro" id="IPR029479">
    <property type="entry name" value="Nitroreductase"/>
</dbReference>
<dbReference type="InterPro" id="IPR000415">
    <property type="entry name" value="Nitroreductase-like"/>
</dbReference>
<dbReference type="InterPro" id="IPR050461">
    <property type="entry name" value="Nitroreductase_HadB/RutE"/>
</dbReference>
<dbReference type="InterPro" id="IPR023936">
    <property type="entry name" value="RutE-like"/>
</dbReference>
<dbReference type="NCBIfam" id="NF003768">
    <property type="entry name" value="PRK05365.1"/>
    <property type="match status" value="1"/>
</dbReference>
<dbReference type="PANTHER" id="PTHR43543">
    <property type="entry name" value="MALONIC SEMIALDEHYDE REDUCTASE RUTE-RELATED"/>
    <property type="match status" value="1"/>
</dbReference>
<dbReference type="PANTHER" id="PTHR43543:SF1">
    <property type="entry name" value="MALONIC SEMIALDEHYDE REDUCTASE RUTE-RELATED"/>
    <property type="match status" value="1"/>
</dbReference>
<dbReference type="Pfam" id="PF00881">
    <property type="entry name" value="Nitroreductase"/>
    <property type="match status" value="1"/>
</dbReference>
<dbReference type="SUPFAM" id="SSF55469">
    <property type="entry name" value="FMN-dependent nitroreductase-like"/>
    <property type="match status" value="1"/>
</dbReference>